<dbReference type="EC" id="6.3.2.4" evidence="2"/>
<dbReference type="EMBL" id="AE004091">
    <property type="protein sequence ID" value="AAG07588.1"/>
    <property type="molecule type" value="Genomic_DNA"/>
</dbReference>
<dbReference type="PIR" id="E83121">
    <property type="entry name" value="E83121"/>
</dbReference>
<dbReference type="RefSeq" id="NP_252890.1">
    <property type="nucleotide sequence ID" value="NC_002516.2"/>
</dbReference>
<dbReference type="RefSeq" id="WP_003114722.1">
    <property type="nucleotide sequence ID" value="NZ_QZGE01000013.1"/>
</dbReference>
<dbReference type="PDB" id="8EVV">
    <property type="method" value="X-ray"/>
    <property type="resolution" value="2.05 A"/>
    <property type="chains" value="A/B/C/D=1-346"/>
</dbReference>
<dbReference type="PDB" id="8EVW">
    <property type="method" value="X-ray"/>
    <property type="resolution" value="1.22 A"/>
    <property type="chains" value="A/B=1-346"/>
</dbReference>
<dbReference type="PDB" id="8EVX">
    <property type="method" value="X-ray"/>
    <property type="resolution" value="1.55 A"/>
    <property type="chains" value="A/B=1-346"/>
</dbReference>
<dbReference type="PDBsum" id="8EVV"/>
<dbReference type="PDBsum" id="8EVW"/>
<dbReference type="PDBsum" id="8EVX"/>
<dbReference type="SMR" id="Q9HWI0"/>
<dbReference type="STRING" id="208964.PA4201"/>
<dbReference type="PaxDb" id="208964-PA4201"/>
<dbReference type="DNASU" id="879033"/>
<dbReference type="GeneID" id="879033"/>
<dbReference type="KEGG" id="pae:PA4201"/>
<dbReference type="PATRIC" id="fig|208964.12.peg.4401"/>
<dbReference type="PseudoCAP" id="PA4201"/>
<dbReference type="HOGENOM" id="CLU_039268_1_1_6"/>
<dbReference type="InParanoid" id="Q9HWI0"/>
<dbReference type="OrthoDB" id="9813261at2"/>
<dbReference type="PhylomeDB" id="Q9HWI0"/>
<dbReference type="BioCyc" id="PAER208964:G1FZ6-4274-MONOMER"/>
<dbReference type="UniPathway" id="UPA00219"/>
<dbReference type="Proteomes" id="UP000002438">
    <property type="component" value="Chromosome"/>
</dbReference>
<dbReference type="GO" id="GO:0005829">
    <property type="term" value="C:cytosol"/>
    <property type="evidence" value="ECO:0000318"/>
    <property type="project" value="GO_Central"/>
</dbReference>
<dbReference type="GO" id="GO:0005524">
    <property type="term" value="F:ATP binding"/>
    <property type="evidence" value="ECO:0007669"/>
    <property type="project" value="UniProtKB-KW"/>
</dbReference>
<dbReference type="GO" id="GO:0008716">
    <property type="term" value="F:D-alanine-D-alanine ligase activity"/>
    <property type="evidence" value="ECO:0000318"/>
    <property type="project" value="GO_Central"/>
</dbReference>
<dbReference type="GO" id="GO:0046872">
    <property type="term" value="F:metal ion binding"/>
    <property type="evidence" value="ECO:0007669"/>
    <property type="project" value="UniProtKB-KW"/>
</dbReference>
<dbReference type="GO" id="GO:0071555">
    <property type="term" value="P:cell wall organization"/>
    <property type="evidence" value="ECO:0007669"/>
    <property type="project" value="UniProtKB-KW"/>
</dbReference>
<dbReference type="GO" id="GO:0009252">
    <property type="term" value="P:peptidoglycan biosynthetic process"/>
    <property type="evidence" value="ECO:0000318"/>
    <property type="project" value="GO_Central"/>
</dbReference>
<dbReference type="GO" id="GO:0008360">
    <property type="term" value="P:regulation of cell shape"/>
    <property type="evidence" value="ECO:0007669"/>
    <property type="project" value="UniProtKB-KW"/>
</dbReference>
<dbReference type="Gene3D" id="3.40.50.20">
    <property type="match status" value="1"/>
</dbReference>
<dbReference type="Gene3D" id="3.30.1490.20">
    <property type="entry name" value="ATP-grasp fold, A domain"/>
    <property type="match status" value="1"/>
</dbReference>
<dbReference type="Gene3D" id="3.30.470.20">
    <property type="entry name" value="ATP-grasp fold, B domain"/>
    <property type="match status" value="1"/>
</dbReference>
<dbReference type="HAMAP" id="MF_00047">
    <property type="entry name" value="Dala_Dala_lig"/>
    <property type="match status" value="1"/>
</dbReference>
<dbReference type="InterPro" id="IPR011761">
    <property type="entry name" value="ATP-grasp"/>
</dbReference>
<dbReference type="InterPro" id="IPR013815">
    <property type="entry name" value="ATP_grasp_subdomain_1"/>
</dbReference>
<dbReference type="InterPro" id="IPR000291">
    <property type="entry name" value="D-Ala_lig_Van_CS"/>
</dbReference>
<dbReference type="InterPro" id="IPR005905">
    <property type="entry name" value="D_ala_D_ala"/>
</dbReference>
<dbReference type="InterPro" id="IPR011095">
    <property type="entry name" value="Dala_Dala_lig_C"/>
</dbReference>
<dbReference type="InterPro" id="IPR011127">
    <property type="entry name" value="Dala_Dala_lig_N"/>
</dbReference>
<dbReference type="InterPro" id="IPR016185">
    <property type="entry name" value="PreATP-grasp_dom_sf"/>
</dbReference>
<dbReference type="NCBIfam" id="TIGR01205">
    <property type="entry name" value="D_ala_D_alaTIGR"/>
    <property type="match status" value="1"/>
</dbReference>
<dbReference type="NCBIfam" id="NF002378">
    <property type="entry name" value="PRK01372.1"/>
    <property type="match status" value="1"/>
</dbReference>
<dbReference type="PANTHER" id="PTHR23132">
    <property type="entry name" value="D-ALANINE--D-ALANINE LIGASE"/>
    <property type="match status" value="1"/>
</dbReference>
<dbReference type="PANTHER" id="PTHR23132:SF23">
    <property type="entry name" value="D-ALANINE--D-ALANINE LIGASE B"/>
    <property type="match status" value="1"/>
</dbReference>
<dbReference type="Pfam" id="PF07478">
    <property type="entry name" value="Dala_Dala_lig_C"/>
    <property type="match status" value="1"/>
</dbReference>
<dbReference type="Pfam" id="PF01820">
    <property type="entry name" value="Dala_Dala_lig_N"/>
    <property type="match status" value="1"/>
</dbReference>
<dbReference type="PIRSF" id="PIRSF039102">
    <property type="entry name" value="Ddl/VanB"/>
    <property type="match status" value="1"/>
</dbReference>
<dbReference type="SUPFAM" id="SSF56059">
    <property type="entry name" value="Glutathione synthetase ATP-binding domain-like"/>
    <property type="match status" value="1"/>
</dbReference>
<dbReference type="SUPFAM" id="SSF52440">
    <property type="entry name" value="PreATP-grasp domain"/>
    <property type="match status" value="1"/>
</dbReference>
<dbReference type="PROSITE" id="PS50975">
    <property type="entry name" value="ATP_GRASP"/>
    <property type="match status" value="1"/>
</dbReference>
<dbReference type="PROSITE" id="PS00843">
    <property type="entry name" value="DALA_DALA_LIGASE_1"/>
    <property type="match status" value="1"/>
</dbReference>
<dbReference type="PROSITE" id="PS00844">
    <property type="entry name" value="DALA_DALA_LIGASE_2"/>
    <property type="match status" value="1"/>
</dbReference>
<gene>
    <name evidence="2" type="primary">ddlA</name>
    <name type="ordered locus">PA4201</name>
</gene>
<protein>
    <recommendedName>
        <fullName evidence="2">D-alanine--D-alanine ligase A</fullName>
        <ecNumber evidence="2">6.3.2.4</ecNumber>
    </recommendedName>
    <alternativeName>
        <fullName evidence="2">D-Ala-D-Ala ligase A</fullName>
    </alternativeName>
    <alternativeName>
        <fullName evidence="2">D-alanylalanine synthetase A</fullName>
    </alternativeName>
</protein>
<name>DDLA_PSEAE</name>
<reference key="1">
    <citation type="journal article" date="2000" name="Nature">
        <title>Complete genome sequence of Pseudomonas aeruginosa PAO1, an opportunistic pathogen.</title>
        <authorList>
            <person name="Stover C.K."/>
            <person name="Pham X.-Q.T."/>
            <person name="Erwin A.L."/>
            <person name="Mizoguchi S.D."/>
            <person name="Warrener P."/>
            <person name="Hickey M.J."/>
            <person name="Brinkman F.S.L."/>
            <person name="Hufnagle W.O."/>
            <person name="Kowalik D.J."/>
            <person name="Lagrou M."/>
            <person name="Garber R.L."/>
            <person name="Goltry L."/>
            <person name="Tolentino E."/>
            <person name="Westbrock-Wadman S."/>
            <person name="Yuan Y."/>
            <person name="Brody L.L."/>
            <person name="Coulter S.N."/>
            <person name="Folger K.R."/>
            <person name="Kas A."/>
            <person name="Larbig K."/>
            <person name="Lim R.M."/>
            <person name="Smith K.A."/>
            <person name="Spencer D.H."/>
            <person name="Wong G.K.-S."/>
            <person name="Wu Z."/>
            <person name="Paulsen I.T."/>
            <person name="Reizer J."/>
            <person name="Saier M.H. Jr."/>
            <person name="Hancock R.E.W."/>
            <person name="Lory S."/>
            <person name="Olson M.V."/>
        </authorList>
    </citation>
    <scope>NUCLEOTIDE SEQUENCE [LARGE SCALE GENOMIC DNA]</scope>
    <source>
        <strain>ATCC 15692 / DSM 22644 / CIP 104116 / JCM 14847 / LMG 12228 / 1C / PRS 101 / PAO1</strain>
    </source>
</reference>
<organism>
    <name type="scientific">Pseudomonas aeruginosa (strain ATCC 15692 / DSM 22644 / CIP 104116 / JCM 14847 / LMG 12228 / 1C / PRS 101 / PAO1)</name>
    <dbReference type="NCBI Taxonomy" id="208964"/>
    <lineage>
        <taxon>Bacteria</taxon>
        <taxon>Pseudomonadati</taxon>
        <taxon>Pseudomonadota</taxon>
        <taxon>Gammaproteobacteria</taxon>
        <taxon>Pseudomonadales</taxon>
        <taxon>Pseudomonadaceae</taxon>
        <taxon>Pseudomonas</taxon>
    </lineage>
</organism>
<proteinExistence type="evidence at protein level"/>
<accession>Q9HWI0</accession>
<evidence type="ECO:0000250" key="1"/>
<evidence type="ECO:0000255" key="2">
    <source>
        <dbReference type="HAMAP-Rule" id="MF_00047"/>
    </source>
</evidence>
<evidence type="ECO:0007829" key="3">
    <source>
        <dbReference type="PDB" id="8EVV"/>
    </source>
</evidence>
<evidence type="ECO:0007829" key="4">
    <source>
        <dbReference type="PDB" id="8EVW"/>
    </source>
</evidence>
<sequence length="346" mass="36534">MGQDKLKVAVLFGGSSEERDVSIASGAQVIQALRSAGHQVLAVDTASGLLGAEEERRLLASKVKEVPPDSDSLAIIRSGKQSLLSAGELAGVDVFFLALHGGTGEDGTLQALLDAGGFAYTGSGHLASAMAMDKDVAKRLFLAAGVETASWLMAPASEEEVREQLGFPLVVKPNSQGSTVGLSIVHSQAELQPAIELAGRYGDEVMLERFVAGREVTVGVLDDQALPVGEILLGGQEVFDYEHKYQAGAVREVFPADLPPAIAAEAQRLALKVHRALKLSGYSRTDFRLDEQGRLWCLEVNTLPGMTATSLLPQAAAAAGIGFAELCERICRLGIERCKGARKARS</sequence>
<comment type="function">
    <text evidence="2">Cell wall formation.</text>
</comment>
<comment type="catalytic activity">
    <reaction evidence="2">
        <text>2 D-alanine + ATP = D-alanyl-D-alanine + ADP + phosphate + H(+)</text>
        <dbReference type="Rhea" id="RHEA:11224"/>
        <dbReference type="ChEBI" id="CHEBI:15378"/>
        <dbReference type="ChEBI" id="CHEBI:30616"/>
        <dbReference type="ChEBI" id="CHEBI:43474"/>
        <dbReference type="ChEBI" id="CHEBI:57416"/>
        <dbReference type="ChEBI" id="CHEBI:57822"/>
        <dbReference type="ChEBI" id="CHEBI:456216"/>
        <dbReference type="EC" id="6.3.2.4"/>
    </reaction>
</comment>
<comment type="cofactor">
    <cofactor evidence="1">
        <name>Mg(2+)</name>
        <dbReference type="ChEBI" id="CHEBI:18420"/>
    </cofactor>
    <cofactor evidence="1">
        <name>Mn(2+)</name>
        <dbReference type="ChEBI" id="CHEBI:29035"/>
    </cofactor>
    <text evidence="1">Binds 2 magnesium or manganese ions per subunit.</text>
</comment>
<comment type="pathway">
    <text evidence="2">Cell wall biogenesis; peptidoglycan biosynthesis.</text>
</comment>
<comment type="subcellular location">
    <subcellularLocation>
        <location evidence="2">Cytoplasm</location>
    </subcellularLocation>
</comment>
<comment type="similarity">
    <text evidence="2">Belongs to the D-alanine--D-alanine ligase family.</text>
</comment>
<keyword id="KW-0002">3D-structure</keyword>
<keyword id="KW-0067">ATP-binding</keyword>
<keyword id="KW-0133">Cell shape</keyword>
<keyword id="KW-0961">Cell wall biogenesis/degradation</keyword>
<keyword id="KW-0963">Cytoplasm</keyword>
<keyword id="KW-0436">Ligase</keyword>
<keyword id="KW-0460">Magnesium</keyword>
<keyword id="KW-0464">Manganese</keyword>
<keyword id="KW-0479">Metal-binding</keyword>
<keyword id="KW-0547">Nucleotide-binding</keyword>
<keyword id="KW-0573">Peptidoglycan synthesis</keyword>
<keyword id="KW-1185">Reference proteome</keyword>
<feature type="chain" id="PRO_0000177855" description="D-alanine--D-alanine ligase A">
    <location>
        <begin position="1"/>
        <end position="346"/>
    </location>
</feature>
<feature type="domain" description="ATP-grasp" evidence="2">
    <location>
        <begin position="138"/>
        <end position="332"/>
    </location>
</feature>
<feature type="binding site" evidence="2">
    <location>
        <begin position="164"/>
        <end position="217"/>
    </location>
    <ligand>
        <name>ATP</name>
        <dbReference type="ChEBI" id="CHEBI:30616"/>
    </ligand>
</feature>
<feature type="binding site" evidence="2">
    <location>
        <position position="286"/>
    </location>
    <ligand>
        <name>Mg(2+)</name>
        <dbReference type="ChEBI" id="CHEBI:18420"/>
        <label>1</label>
    </ligand>
</feature>
<feature type="binding site" evidence="2">
    <location>
        <position position="299"/>
    </location>
    <ligand>
        <name>Mg(2+)</name>
        <dbReference type="ChEBI" id="CHEBI:18420"/>
        <label>1</label>
    </ligand>
</feature>
<feature type="binding site" evidence="2">
    <location>
        <position position="299"/>
    </location>
    <ligand>
        <name>Mg(2+)</name>
        <dbReference type="ChEBI" id="CHEBI:18420"/>
        <label>2</label>
    </ligand>
</feature>
<feature type="binding site" evidence="2">
    <location>
        <position position="301"/>
    </location>
    <ligand>
        <name>Mg(2+)</name>
        <dbReference type="ChEBI" id="CHEBI:18420"/>
        <label>2</label>
    </ligand>
</feature>
<feature type="strand" evidence="4">
    <location>
        <begin position="7"/>
        <end position="12"/>
    </location>
</feature>
<feature type="helix" evidence="4">
    <location>
        <begin position="19"/>
        <end position="35"/>
    </location>
</feature>
<feature type="strand" evidence="4">
    <location>
        <begin position="39"/>
        <end position="44"/>
    </location>
</feature>
<feature type="turn" evidence="4">
    <location>
        <begin position="45"/>
        <end position="47"/>
    </location>
</feature>
<feature type="helix" evidence="4">
    <location>
        <begin position="52"/>
        <end position="59"/>
    </location>
</feature>
<feature type="helix" evidence="4">
    <location>
        <begin position="70"/>
        <end position="76"/>
    </location>
</feature>
<feature type="turn" evidence="3">
    <location>
        <begin position="83"/>
        <end position="85"/>
    </location>
</feature>
<feature type="helix" evidence="4">
    <location>
        <begin position="87"/>
        <end position="89"/>
    </location>
</feature>
<feature type="strand" evidence="4">
    <location>
        <begin position="93"/>
        <end position="97"/>
    </location>
</feature>
<feature type="helix" evidence="4">
    <location>
        <begin position="102"/>
        <end position="105"/>
    </location>
</feature>
<feature type="helix" evidence="4">
    <location>
        <begin position="108"/>
        <end position="115"/>
    </location>
</feature>
<feature type="strand" evidence="4">
    <location>
        <begin position="120"/>
        <end position="122"/>
    </location>
</feature>
<feature type="helix" evidence="4">
    <location>
        <begin position="125"/>
        <end position="132"/>
    </location>
</feature>
<feature type="helix" evidence="4">
    <location>
        <begin position="134"/>
        <end position="143"/>
    </location>
</feature>
<feature type="strand" evidence="4">
    <location>
        <begin position="151"/>
        <end position="155"/>
    </location>
</feature>
<feature type="helix" evidence="4">
    <location>
        <begin position="158"/>
        <end position="164"/>
    </location>
</feature>
<feature type="strand" evidence="4">
    <location>
        <begin position="167"/>
        <end position="173"/>
    </location>
</feature>
<feature type="turn" evidence="4">
    <location>
        <begin position="178"/>
        <end position="181"/>
    </location>
</feature>
<feature type="strand" evidence="4">
    <location>
        <begin position="183"/>
        <end position="185"/>
    </location>
</feature>
<feature type="helix" evidence="4">
    <location>
        <begin position="188"/>
        <end position="199"/>
    </location>
</feature>
<feature type="strand" evidence="4">
    <location>
        <begin position="205"/>
        <end position="209"/>
    </location>
</feature>
<feature type="strand" evidence="4">
    <location>
        <begin position="213"/>
        <end position="221"/>
    </location>
</feature>
<feature type="strand" evidence="4">
    <location>
        <begin position="229"/>
        <end position="232"/>
    </location>
</feature>
<feature type="strand" evidence="3">
    <location>
        <begin position="235"/>
        <end position="237"/>
    </location>
</feature>
<feature type="helix" evidence="4">
    <location>
        <begin position="241"/>
        <end position="245"/>
    </location>
</feature>
<feature type="strand" evidence="4">
    <location>
        <begin position="249"/>
        <end position="255"/>
    </location>
</feature>
<feature type="helix" evidence="4">
    <location>
        <begin position="260"/>
        <end position="276"/>
    </location>
</feature>
<feature type="strand" evidence="4">
    <location>
        <begin position="281"/>
        <end position="289"/>
    </location>
</feature>
<feature type="strand" evidence="4">
    <location>
        <begin position="295"/>
        <end position="303"/>
    </location>
</feature>
<feature type="helix" evidence="4">
    <location>
        <begin position="311"/>
        <end position="318"/>
    </location>
</feature>
<feature type="helix" evidence="4">
    <location>
        <begin position="323"/>
        <end position="337"/>
    </location>
</feature>